<gene>
    <name type="primary">ACVR2A</name>
    <name type="synonym">ACTRII</name>
    <name type="synonym">ACVR2</name>
</gene>
<name>AVR2A_BOVIN</name>
<accession>Q28043</accession>
<accession>A5D7L7</accession>
<reference key="1">
    <citation type="journal article" date="1994" name="Mol. Cell. Endocrinol.">
        <title>Bovine activin receptor type II cDNA: cloning and tissue expression.</title>
        <authorList>
            <person name="Ethier J.-F."/>
            <person name="Houde A."/>
            <person name="Lussier J.G."/>
            <person name="Silversides D.W."/>
        </authorList>
    </citation>
    <scope>NUCLEOTIDE SEQUENCE [MRNA]</scope>
    <source>
        <strain>Holstein</strain>
        <tissue>Testis</tissue>
    </source>
</reference>
<reference key="2">
    <citation type="journal article" date="1996" name="Mamm. Genome">
        <title>Fluorescent in situ localization of the bovine activin receptor type IIA locus on chromosome 2 (2q2.3-2.4).</title>
        <authorList>
            <person name="Monteagudo L.V."/>
            <person name="Heriz A."/>
            <person name="Flavin N."/>
            <person name="Rogers M."/>
            <person name="Ennis S."/>
            <person name="Arruga M.V."/>
        </authorList>
    </citation>
    <scope>NUCLEOTIDE SEQUENCE [MRNA]</scope>
    <source>
        <tissue>Ovary</tissue>
    </source>
</reference>
<reference key="3">
    <citation type="submission" date="2007-04" db="EMBL/GenBank/DDBJ databases">
        <authorList>
            <consortium name="NIH - Mammalian Gene Collection (MGC) project"/>
        </authorList>
    </citation>
    <scope>NUCLEOTIDE SEQUENCE [LARGE SCALE MRNA]</scope>
    <source>
        <strain>Hereford</strain>
        <tissue>Fetal muscle</tissue>
    </source>
</reference>
<comment type="function">
    <text evidence="2 3">On ligand binding, forms a receptor complex consisting of two type II and two type I transmembrane serine/threonine kinases. Type II receptors phosphorylate and activate type I receptors which autophosphorylate, then bind and activate SMAD transcriptional regulators. Receptor for activin A, activin B and inhibin A. Mediates induction of adipogenesis by GDF6.</text>
</comment>
<comment type="catalytic activity">
    <reaction evidence="3">
        <text>L-threonyl-[receptor-protein] + ATP = O-phospho-L-threonyl-[receptor-protein] + ADP + H(+)</text>
        <dbReference type="Rhea" id="RHEA:44880"/>
        <dbReference type="Rhea" id="RHEA-COMP:11024"/>
        <dbReference type="Rhea" id="RHEA-COMP:11025"/>
        <dbReference type="ChEBI" id="CHEBI:15378"/>
        <dbReference type="ChEBI" id="CHEBI:30013"/>
        <dbReference type="ChEBI" id="CHEBI:30616"/>
        <dbReference type="ChEBI" id="CHEBI:61977"/>
        <dbReference type="ChEBI" id="CHEBI:456216"/>
        <dbReference type="EC" id="2.7.11.30"/>
    </reaction>
    <physiologicalReaction direction="left-to-right" evidence="3">
        <dbReference type="Rhea" id="RHEA:44881"/>
    </physiologicalReaction>
</comment>
<comment type="catalytic activity">
    <reaction evidence="3">
        <text>L-seryl-[receptor-protein] + ATP = O-phospho-L-seryl-[receptor-protein] + ADP + H(+)</text>
        <dbReference type="Rhea" id="RHEA:18673"/>
        <dbReference type="Rhea" id="RHEA-COMP:11022"/>
        <dbReference type="Rhea" id="RHEA-COMP:11023"/>
        <dbReference type="ChEBI" id="CHEBI:15378"/>
        <dbReference type="ChEBI" id="CHEBI:29999"/>
        <dbReference type="ChEBI" id="CHEBI:30616"/>
        <dbReference type="ChEBI" id="CHEBI:83421"/>
        <dbReference type="ChEBI" id="CHEBI:456216"/>
        <dbReference type="EC" id="2.7.11.30"/>
    </reaction>
    <physiologicalReaction direction="left-to-right" evidence="3">
        <dbReference type="Rhea" id="RHEA:18674"/>
    </physiologicalReaction>
</comment>
<comment type="cofactor">
    <cofactor evidence="1">
        <name>Mg(2+)</name>
        <dbReference type="ChEBI" id="CHEBI:18420"/>
    </cofactor>
    <cofactor evidence="1">
        <name>Mn(2+)</name>
        <dbReference type="ChEBI" id="CHEBI:29035"/>
    </cofactor>
</comment>
<comment type="subunit">
    <text evidence="2 3">Part of a complex consisting of MAGI2/ARIP1, ACVR2A, ACVR1B and SMAD3 (By similarity). Interacts with MAGI2/ARIP1 (By similarity). Interacts with type I receptor ACVR1 (By similarity). Interacts with BMP7 (By similarity). Interacts with TSC22D1/TSC-22 (By similarity). Interacts with activin A/INHBA (By similarity).</text>
</comment>
<comment type="subcellular location">
    <subcellularLocation>
        <location evidence="3">Cell membrane</location>
        <topology evidence="4">Single-pass type I membrane protein</topology>
    </subcellularLocation>
</comment>
<comment type="similarity">
    <text evidence="7">Belongs to the protein kinase superfamily. TKL Ser/Thr protein kinase family. TGFB receptor subfamily.</text>
</comment>
<sequence>MGAAAKLAFAVFLISCSSGAILGRSETQECIFYNANWERDRTNRTGVESCYGDKDKRRHCFATWKNISGSIEIVKQGCWLDDINCYDRTDCIEKKDSPEVYFCCCEGNMCNERFSYFPEMEVTQPTSNPVTPKPPYYNILLYSLVPLMLIAGIVICAFWVYRHHKMAYPPVLVPTQDPGPPPPSPLLGLKPLQLLEVKARGRFGCVWKAQLLNEYVAVKIFPIQDKQSWQNEYEVYSLPGMKHENILQFIGAEKRGTSVDVDLWLITAFHEKGSLSDFLKANVVSWNELCHIAETMARGLAYLHEDIPGLKDGHKPAISHRDIKSKNVLLKNNLTACIADFGLALKFEAGKSAGDTHGQVGTRRYMAPEVLEGAINFQRDAFLRIDMYAMGLVLWELASRCTAADGPVDEYMLPFEEEIGQHPSLEDMQEVVVHKKKRPVLRDYWQKHAGMAMLCETIEECWDHDAEARLSAGCVGERITQMQRLTNIITTEDIVTVVTMVTNVDFPPKESSL</sequence>
<evidence type="ECO:0000250" key="1"/>
<evidence type="ECO:0000250" key="2">
    <source>
        <dbReference type="UniProtKB" id="P27037"/>
    </source>
</evidence>
<evidence type="ECO:0000250" key="3">
    <source>
        <dbReference type="UniProtKB" id="P27038"/>
    </source>
</evidence>
<evidence type="ECO:0000255" key="4"/>
<evidence type="ECO:0000255" key="5">
    <source>
        <dbReference type="PROSITE-ProRule" id="PRU00159"/>
    </source>
</evidence>
<evidence type="ECO:0000255" key="6">
    <source>
        <dbReference type="PROSITE-ProRule" id="PRU10027"/>
    </source>
</evidence>
<evidence type="ECO:0000305" key="7"/>
<evidence type="ECO:0000305" key="8">
    <source>
    </source>
</evidence>
<organism>
    <name type="scientific">Bos taurus</name>
    <name type="common">Bovine</name>
    <dbReference type="NCBI Taxonomy" id="9913"/>
    <lineage>
        <taxon>Eukaryota</taxon>
        <taxon>Metazoa</taxon>
        <taxon>Chordata</taxon>
        <taxon>Craniata</taxon>
        <taxon>Vertebrata</taxon>
        <taxon>Euteleostomi</taxon>
        <taxon>Mammalia</taxon>
        <taxon>Eutheria</taxon>
        <taxon>Laurasiatheria</taxon>
        <taxon>Artiodactyla</taxon>
        <taxon>Ruminantia</taxon>
        <taxon>Pecora</taxon>
        <taxon>Bovidae</taxon>
        <taxon>Bovinae</taxon>
        <taxon>Bos</taxon>
    </lineage>
</organism>
<keyword id="KW-0067">ATP-binding</keyword>
<keyword id="KW-1003">Cell membrane</keyword>
<keyword id="KW-1015">Disulfide bond</keyword>
<keyword id="KW-0325">Glycoprotein</keyword>
<keyword id="KW-0418">Kinase</keyword>
<keyword id="KW-0460">Magnesium</keyword>
<keyword id="KW-0464">Manganese</keyword>
<keyword id="KW-0472">Membrane</keyword>
<keyword id="KW-0479">Metal-binding</keyword>
<keyword id="KW-0547">Nucleotide-binding</keyword>
<keyword id="KW-0675">Receptor</keyword>
<keyword id="KW-1185">Reference proteome</keyword>
<keyword id="KW-0723">Serine/threonine-protein kinase</keyword>
<keyword id="KW-0732">Signal</keyword>
<keyword id="KW-0808">Transferase</keyword>
<keyword id="KW-0812">Transmembrane</keyword>
<keyword id="KW-1133">Transmembrane helix</keyword>
<feature type="signal peptide" evidence="4">
    <location>
        <begin position="1"/>
        <end position="19"/>
    </location>
</feature>
<feature type="chain" id="PRO_0000024397" description="Activin receptor type-2A">
    <location>
        <begin position="20"/>
        <end position="513"/>
    </location>
</feature>
<feature type="topological domain" description="Extracellular" evidence="4">
    <location>
        <begin position="20"/>
        <end position="135"/>
    </location>
</feature>
<feature type="transmembrane region" description="Helical" evidence="4">
    <location>
        <begin position="136"/>
        <end position="161"/>
    </location>
</feature>
<feature type="topological domain" description="Cytoplasmic" evidence="4">
    <location>
        <begin position="162"/>
        <end position="513"/>
    </location>
</feature>
<feature type="domain" description="Protein kinase" evidence="5">
    <location>
        <begin position="192"/>
        <end position="485"/>
    </location>
</feature>
<feature type="active site" description="Proton acceptor" evidence="5 6">
    <location>
        <position position="322"/>
    </location>
</feature>
<feature type="binding site" evidence="5">
    <location>
        <begin position="198"/>
        <end position="206"/>
    </location>
    <ligand>
        <name>ATP</name>
        <dbReference type="ChEBI" id="CHEBI:30616"/>
    </ligand>
</feature>
<feature type="binding site" evidence="5">
    <location>
        <position position="219"/>
    </location>
    <ligand>
        <name>ATP</name>
        <dbReference type="ChEBI" id="CHEBI:30616"/>
    </ligand>
</feature>
<feature type="glycosylation site" description="N-linked (GlcNAc...) asparagine" evidence="4">
    <location>
        <position position="43"/>
    </location>
</feature>
<feature type="glycosylation site" description="N-linked (GlcNAc...) asparagine" evidence="4">
    <location>
        <position position="66"/>
    </location>
</feature>
<feature type="disulfide bond" evidence="3">
    <location>
        <begin position="30"/>
        <end position="60"/>
    </location>
</feature>
<feature type="disulfide bond" evidence="3">
    <location>
        <begin position="50"/>
        <end position="78"/>
    </location>
</feature>
<feature type="disulfide bond" evidence="3">
    <location>
        <begin position="85"/>
        <end position="104"/>
    </location>
</feature>
<feature type="disulfide bond" evidence="3">
    <location>
        <begin position="91"/>
        <end position="103"/>
    </location>
</feature>
<feature type="disulfide bond" evidence="3">
    <location>
        <begin position="105"/>
        <end position="110"/>
    </location>
</feature>
<protein>
    <recommendedName>
        <fullName evidence="8">Activin receptor type-2A</fullName>
        <ecNumber evidence="3">2.7.11.30</ecNumber>
    </recommendedName>
    <alternativeName>
        <fullName>Activin receptor type IIA</fullName>
        <shortName>ACTR-IIA</shortName>
    </alternativeName>
</protein>
<proteinExistence type="evidence at transcript level"/>
<dbReference type="EC" id="2.7.11.30" evidence="3"/>
<dbReference type="EMBL" id="L21717">
    <property type="protein sequence ID" value="AAA74597.1"/>
    <property type="molecule type" value="mRNA"/>
</dbReference>
<dbReference type="EMBL" id="U43208">
    <property type="protein sequence ID" value="AAC48694.1"/>
    <property type="molecule type" value="mRNA"/>
</dbReference>
<dbReference type="EMBL" id="BC140605">
    <property type="protein sequence ID" value="AAI40606.1"/>
    <property type="molecule type" value="mRNA"/>
</dbReference>
<dbReference type="PIR" id="I45850">
    <property type="entry name" value="I45850"/>
</dbReference>
<dbReference type="RefSeq" id="NP_776652.1">
    <property type="nucleotide sequence ID" value="NM_174227.3"/>
</dbReference>
<dbReference type="SMR" id="Q28043"/>
<dbReference type="FunCoup" id="Q28043">
    <property type="interactions" value="1956"/>
</dbReference>
<dbReference type="STRING" id="9913.ENSBTAP00000024108"/>
<dbReference type="GlyCosmos" id="Q28043">
    <property type="glycosylation" value="2 sites, No reported glycans"/>
</dbReference>
<dbReference type="GlyGen" id="Q28043">
    <property type="glycosylation" value="2 sites"/>
</dbReference>
<dbReference type="PaxDb" id="9913-ENSBTAP00000024108"/>
<dbReference type="Ensembl" id="ENSBTAT00000024108.6">
    <property type="protein sequence ID" value="ENSBTAP00000024108.5"/>
    <property type="gene ID" value="ENSBTAG00000018114.7"/>
</dbReference>
<dbReference type="GeneID" id="281598"/>
<dbReference type="KEGG" id="bta:281598"/>
<dbReference type="CTD" id="92"/>
<dbReference type="VEuPathDB" id="HostDB:ENSBTAG00000018114"/>
<dbReference type="VGNC" id="VGNC:25595">
    <property type="gene designation" value="ACVR2A"/>
</dbReference>
<dbReference type="eggNOG" id="KOG3653">
    <property type="taxonomic scope" value="Eukaryota"/>
</dbReference>
<dbReference type="GeneTree" id="ENSGT00940000157233"/>
<dbReference type="HOGENOM" id="CLU_000288_8_4_1"/>
<dbReference type="InParanoid" id="Q28043"/>
<dbReference type="OrthoDB" id="547665at2759"/>
<dbReference type="TreeFam" id="TF352876"/>
<dbReference type="BRENDA" id="2.7.10.2">
    <property type="organism ID" value="908"/>
</dbReference>
<dbReference type="Reactome" id="R-BTA-1502540">
    <property type="pathway name" value="Signaling by Activin"/>
</dbReference>
<dbReference type="Reactome" id="R-BTA-201451">
    <property type="pathway name" value="Signaling by BMP"/>
</dbReference>
<dbReference type="Reactome" id="R-BTA-9839406">
    <property type="pathway name" value="TGFBR3 regulates activin signaling"/>
</dbReference>
<dbReference type="Proteomes" id="UP000009136">
    <property type="component" value="Chromosome 2"/>
</dbReference>
<dbReference type="Bgee" id="ENSBTAG00000018114">
    <property type="expression patterns" value="Expressed in spiral colon and 107 other cell types or tissues"/>
</dbReference>
<dbReference type="GO" id="GO:0048179">
    <property type="term" value="C:activin receptor complex"/>
    <property type="evidence" value="ECO:0000318"/>
    <property type="project" value="GO_Central"/>
</dbReference>
<dbReference type="GO" id="GO:0005886">
    <property type="term" value="C:plasma membrane"/>
    <property type="evidence" value="ECO:0000250"/>
    <property type="project" value="UniProtKB"/>
</dbReference>
<dbReference type="GO" id="GO:0048185">
    <property type="term" value="F:activin binding"/>
    <property type="evidence" value="ECO:0000318"/>
    <property type="project" value="GO_Central"/>
</dbReference>
<dbReference type="GO" id="GO:0017002">
    <property type="term" value="F:activin receptor activity"/>
    <property type="evidence" value="ECO:0000250"/>
    <property type="project" value="UniProtKB"/>
</dbReference>
<dbReference type="GO" id="GO:0005524">
    <property type="term" value="F:ATP binding"/>
    <property type="evidence" value="ECO:0007669"/>
    <property type="project" value="UniProtKB-KW"/>
</dbReference>
<dbReference type="GO" id="GO:0098821">
    <property type="term" value="F:BMP receptor activity"/>
    <property type="evidence" value="ECO:0000250"/>
    <property type="project" value="UniProtKB"/>
</dbReference>
<dbReference type="GO" id="GO:0046872">
    <property type="term" value="F:metal ion binding"/>
    <property type="evidence" value="ECO:0007669"/>
    <property type="project" value="UniProtKB-KW"/>
</dbReference>
<dbReference type="GO" id="GO:0032924">
    <property type="term" value="P:activin receptor signaling pathway"/>
    <property type="evidence" value="ECO:0000318"/>
    <property type="project" value="GO_Central"/>
</dbReference>
<dbReference type="GO" id="GO:0030509">
    <property type="term" value="P:BMP signaling pathway"/>
    <property type="evidence" value="ECO:0000250"/>
    <property type="project" value="UniProtKB"/>
</dbReference>
<dbReference type="GO" id="GO:0071363">
    <property type="term" value="P:cellular response to growth factor stimulus"/>
    <property type="evidence" value="ECO:0000318"/>
    <property type="project" value="GO_Central"/>
</dbReference>
<dbReference type="GO" id="GO:0007389">
    <property type="term" value="P:pattern specification process"/>
    <property type="evidence" value="ECO:0000318"/>
    <property type="project" value="GO_Central"/>
</dbReference>
<dbReference type="CDD" id="cd14141">
    <property type="entry name" value="STKc_ACVR2a"/>
    <property type="match status" value="1"/>
</dbReference>
<dbReference type="CDD" id="cd23631">
    <property type="entry name" value="TFP_LU_ECD_ACVR2A"/>
    <property type="match status" value="1"/>
</dbReference>
<dbReference type="FunFam" id="1.10.510.10:FF:000099">
    <property type="entry name" value="Serine/threonine-protein kinase receptor"/>
    <property type="match status" value="1"/>
</dbReference>
<dbReference type="FunFam" id="2.10.60.10:FF:000002">
    <property type="entry name" value="Serine/threonine-protein kinase receptor"/>
    <property type="match status" value="1"/>
</dbReference>
<dbReference type="FunFam" id="3.30.200.20:FF:000094">
    <property type="entry name" value="Serine/threonine-protein kinase receptor"/>
    <property type="match status" value="1"/>
</dbReference>
<dbReference type="Gene3D" id="2.10.60.10">
    <property type="entry name" value="CD59"/>
    <property type="match status" value="1"/>
</dbReference>
<dbReference type="Gene3D" id="3.30.200.20">
    <property type="entry name" value="Phosphorylase Kinase, domain 1"/>
    <property type="match status" value="1"/>
</dbReference>
<dbReference type="Gene3D" id="1.10.510.10">
    <property type="entry name" value="Transferase(Phosphotransferase) domain 1"/>
    <property type="match status" value="1"/>
</dbReference>
<dbReference type="InterPro" id="IPR000472">
    <property type="entry name" value="Activin_recp"/>
</dbReference>
<dbReference type="InterPro" id="IPR011009">
    <property type="entry name" value="Kinase-like_dom_sf"/>
</dbReference>
<dbReference type="InterPro" id="IPR000719">
    <property type="entry name" value="Prot_kinase_dom"/>
</dbReference>
<dbReference type="InterPro" id="IPR008271">
    <property type="entry name" value="Ser/Thr_kinase_AS"/>
</dbReference>
<dbReference type="InterPro" id="IPR045860">
    <property type="entry name" value="Snake_toxin-like_sf"/>
</dbReference>
<dbReference type="InterPro" id="IPR000333">
    <property type="entry name" value="TGFB_receptor"/>
</dbReference>
<dbReference type="PANTHER" id="PTHR23255:SF64">
    <property type="entry name" value="ACTIVIN RECEPTOR TYPE-2A"/>
    <property type="match status" value="1"/>
</dbReference>
<dbReference type="PANTHER" id="PTHR23255">
    <property type="entry name" value="TRANSFORMING GROWTH FACTOR-BETA RECEPTOR TYPE I AND II"/>
    <property type="match status" value="1"/>
</dbReference>
<dbReference type="Pfam" id="PF01064">
    <property type="entry name" value="Activin_recp"/>
    <property type="match status" value="1"/>
</dbReference>
<dbReference type="Pfam" id="PF00069">
    <property type="entry name" value="Pkinase"/>
    <property type="match status" value="1"/>
</dbReference>
<dbReference type="PRINTS" id="PR00653">
    <property type="entry name" value="ACTIVIN2R"/>
</dbReference>
<dbReference type="SMART" id="SM00220">
    <property type="entry name" value="S_TKc"/>
    <property type="match status" value="1"/>
</dbReference>
<dbReference type="SUPFAM" id="SSF56112">
    <property type="entry name" value="Protein kinase-like (PK-like)"/>
    <property type="match status" value="1"/>
</dbReference>
<dbReference type="SUPFAM" id="SSF57302">
    <property type="entry name" value="Snake toxin-like"/>
    <property type="match status" value="1"/>
</dbReference>
<dbReference type="PROSITE" id="PS50011">
    <property type="entry name" value="PROTEIN_KINASE_DOM"/>
    <property type="match status" value="1"/>
</dbReference>
<dbReference type="PROSITE" id="PS00108">
    <property type="entry name" value="PROTEIN_KINASE_ST"/>
    <property type="match status" value="1"/>
</dbReference>